<feature type="chain" id="PRO_1000121867" description="Glutamate-1-semialdehyde 2,1-aminomutase">
    <location>
        <begin position="1"/>
        <end position="422"/>
    </location>
</feature>
<feature type="modified residue" description="N6-(pyridoxal phosphate)lysine" evidence="1">
    <location>
        <position position="258"/>
    </location>
</feature>
<accession>B0B9W0</accession>
<organism>
    <name type="scientific">Chlamydia trachomatis serovar L2 (strain ATCC VR-902B / DSM 19102 / 434/Bu)</name>
    <dbReference type="NCBI Taxonomy" id="471472"/>
    <lineage>
        <taxon>Bacteria</taxon>
        <taxon>Pseudomonadati</taxon>
        <taxon>Chlamydiota</taxon>
        <taxon>Chlamydiia</taxon>
        <taxon>Chlamydiales</taxon>
        <taxon>Chlamydiaceae</taxon>
        <taxon>Chlamydia/Chlamydophila group</taxon>
        <taxon>Chlamydia</taxon>
    </lineage>
</organism>
<sequence length="422" mass="45940">MSHLFSKACQYFPGGVNSPVRACRAVNITPPIVARASKEVFIDSLDKTFIDFCGSWGSLIHGHSHPKICAAIRQGLERGSSYGLTSEQEILFAEEIFSYLGLETNYKIRFMSTGSEATMTAVRLARGITGRPIIIKFLGCYHGHADTFLQEKPFSHTSLDTLDLAHPLTLSLPFNDFPLFQTVMNSLGHKVAGVIFEPVCANMGVILPVPDFIEGVIQTCQQTGSFSIMDEVVTGFRVAQGGAAALYHVKPDILVFGKILGGGLPASAVVAPKDIMDHLAPEGKIFQAGTLSGNPLAMIAGKVSVNLCREQGFYTQLATIEQNFLSPIEHMIRTTGIPVTLVRYGSLFSFFFNPNRPNNLADAQLSDIEAFQKFYQSAFSKGVYLSPSPFEASFLSAAHSMESLDYAQTALIESLEQVFSLV</sequence>
<dbReference type="EC" id="5.4.3.8" evidence="1"/>
<dbReference type="EMBL" id="AM884176">
    <property type="protein sequence ID" value="CAP03901.1"/>
    <property type="molecule type" value="Genomic_DNA"/>
</dbReference>
<dbReference type="RefSeq" id="WP_009873641.1">
    <property type="nucleotide sequence ID" value="NC_010287.1"/>
</dbReference>
<dbReference type="RefSeq" id="YP_001654538.1">
    <property type="nucleotide sequence ID" value="NC_010287.1"/>
</dbReference>
<dbReference type="SMR" id="B0B9W0"/>
<dbReference type="KEGG" id="ctb:CTL0462"/>
<dbReference type="PATRIC" id="fig|471472.4.peg.497"/>
<dbReference type="HOGENOM" id="CLU_016922_1_5_0"/>
<dbReference type="UniPathway" id="UPA00251">
    <property type="reaction ID" value="UER00317"/>
</dbReference>
<dbReference type="Proteomes" id="UP001154402">
    <property type="component" value="Chromosome"/>
</dbReference>
<dbReference type="GO" id="GO:0005737">
    <property type="term" value="C:cytoplasm"/>
    <property type="evidence" value="ECO:0007669"/>
    <property type="project" value="UniProtKB-SubCell"/>
</dbReference>
<dbReference type="GO" id="GO:0042286">
    <property type="term" value="F:glutamate-1-semialdehyde 2,1-aminomutase activity"/>
    <property type="evidence" value="ECO:0007669"/>
    <property type="project" value="UniProtKB-UniRule"/>
</dbReference>
<dbReference type="GO" id="GO:0030170">
    <property type="term" value="F:pyridoxal phosphate binding"/>
    <property type="evidence" value="ECO:0007669"/>
    <property type="project" value="InterPro"/>
</dbReference>
<dbReference type="GO" id="GO:0008483">
    <property type="term" value="F:transaminase activity"/>
    <property type="evidence" value="ECO:0007669"/>
    <property type="project" value="InterPro"/>
</dbReference>
<dbReference type="GO" id="GO:0006782">
    <property type="term" value="P:protoporphyrinogen IX biosynthetic process"/>
    <property type="evidence" value="ECO:0007669"/>
    <property type="project" value="UniProtKB-UniRule"/>
</dbReference>
<dbReference type="CDD" id="cd00610">
    <property type="entry name" value="OAT_like"/>
    <property type="match status" value="1"/>
</dbReference>
<dbReference type="Gene3D" id="3.90.1150.10">
    <property type="entry name" value="Aspartate Aminotransferase, domain 1"/>
    <property type="match status" value="1"/>
</dbReference>
<dbReference type="Gene3D" id="3.40.640.10">
    <property type="entry name" value="Type I PLP-dependent aspartate aminotransferase-like (Major domain)"/>
    <property type="match status" value="1"/>
</dbReference>
<dbReference type="HAMAP" id="MF_00375">
    <property type="entry name" value="HemL_aminotrans_3"/>
    <property type="match status" value="1"/>
</dbReference>
<dbReference type="InterPro" id="IPR004639">
    <property type="entry name" value="4pyrrol_synth_GluAld_NH2Trfase"/>
</dbReference>
<dbReference type="InterPro" id="IPR005814">
    <property type="entry name" value="Aminotrans_3"/>
</dbReference>
<dbReference type="InterPro" id="IPR049704">
    <property type="entry name" value="Aminotrans_3_PPA_site"/>
</dbReference>
<dbReference type="InterPro" id="IPR015424">
    <property type="entry name" value="PyrdxlP-dep_Trfase"/>
</dbReference>
<dbReference type="InterPro" id="IPR015421">
    <property type="entry name" value="PyrdxlP-dep_Trfase_major"/>
</dbReference>
<dbReference type="InterPro" id="IPR015422">
    <property type="entry name" value="PyrdxlP-dep_Trfase_small"/>
</dbReference>
<dbReference type="NCBIfam" id="TIGR00713">
    <property type="entry name" value="hemL"/>
    <property type="match status" value="1"/>
</dbReference>
<dbReference type="NCBIfam" id="NF000818">
    <property type="entry name" value="PRK00062.1"/>
    <property type="match status" value="1"/>
</dbReference>
<dbReference type="NCBIfam" id="NF001864">
    <property type="entry name" value="PRK00615.1"/>
    <property type="match status" value="1"/>
</dbReference>
<dbReference type="PANTHER" id="PTHR43713">
    <property type="entry name" value="GLUTAMATE-1-SEMIALDEHYDE 2,1-AMINOMUTASE"/>
    <property type="match status" value="1"/>
</dbReference>
<dbReference type="PANTHER" id="PTHR43713:SF3">
    <property type="entry name" value="GLUTAMATE-1-SEMIALDEHYDE 2,1-AMINOMUTASE 1, CHLOROPLASTIC-RELATED"/>
    <property type="match status" value="1"/>
</dbReference>
<dbReference type="Pfam" id="PF00202">
    <property type="entry name" value="Aminotran_3"/>
    <property type="match status" value="1"/>
</dbReference>
<dbReference type="SUPFAM" id="SSF53383">
    <property type="entry name" value="PLP-dependent transferases"/>
    <property type="match status" value="1"/>
</dbReference>
<dbReference type="PROSITE" id="PS00600">
    <property type="entry name" value="AA_TRANSFER_CLASS_3"/>
    <property type="match status" value="1"/>
</dbReference>
<reference key="1">
    <citation type="journal article" date="2008" name="Genome Res.">
        <title>Chlamydia trachomatis: genome sequence analysis of lymphogranuloma venereum isolates.</title>
        <authorList>
            <person name="Thomson N.R."/>
            <person name="Holden M.T.G."/>
            <person name="Carder C."/>
            <person name="Lennard N."/>
            <person name="Lockey S.J."/>
            <person name="Marsh P."/>
            <person name="Skipp P."/>
            <person name="O'Connor C.D."/>
            <person name="Goodhead I."/>
            <person name="Norbertzcak H."/>
            <person name="Harris B."/>
            <person name="Ormond D."/>
            <person name="Rance R."/>
            <person name="Quail M.A."/>
            <person name="Parkhill J."/>
            <person name="Stephens R.S."/>
            <person name="Clarke I.N."/>
        </authorList>
    </citation>
    <scope>NUCLEOTIDE SEQUENCE [LARGE SCALE GENOMIC DNA]</scope>
    <source>
        <strain>ATCC VR-902B / DSM 19102 / 434/Bu</strain>
    </source>
</reference>
<gene>
    <name evidence="1" type="primary">hemL</name>
    <name type="ordered locus">CTL0462</name>
</gene>
<keyword id="KW-0963">Cytoplasm</keyword>
<keyword id="KW-0413">Isomerase</keyword>
<keyword id="KW-0627">Porphyrin biosynthesis</keyword>
<keyword id="KW-0663">Pyridoxal phosphate</keyword>
<protein>
    <recommendedName>
        <fullName evidence="1">Glutamate-1-semialdehyde 2,1-aminomutase</fullName>
        <shortName evidence="1">GSA</shortName>
        <ecNumber evidence="1">5.4.3.8</ecNumber>
    </recommendedName>
    <alternativeName>
        <fullName evidence="1">Glutamate-1-semialdehyde aminotransferase</fullName>
        <shortName evidence="1">GSA-AT</shortName>
    </alternativeName>
</protein>
<name>GSA_CHLT2</name>
<comment type="catalytic activity">
    <reaction evidence="1">
        <text>(S)-4-amino-5-oxopentanoate = 5-aminolevulinate</text>
        <dbReference type="Rhea" id="RHEA:14265"/>
        <dbReference type="ChEBI" id="CHEBI:57501"/>
        <dbReference type="ChEBI" id="CHEBI:356416"/>
        <dbReference type="EC" id="5.4.3.8"/>
    </reaction>
</comment>
<comment type="cofactor">
    <cofactor evidence="1">
        <name>pyridoxal 5'-phosphate</name>
        <dbReference type="ChEBI" id="CHEBI:597326"/>
    </cofactor>
</comment>
<comment type="pathway">
    <text evidence="1">Porphyrin-containing compound metabolism; protoporphyrin-IX biosynthesis; 5-aminolevulinate from L-glutamyl-tRNA(Glu): step 2/2.</text>
</comment>
<comment type="subunit">
    <text evidence="1">Homodimer.</text>
</comment>
<comment type="subcellular location">
    <subcellularLocation>
        <location evidence="1">Cytoplasm</location>
    </subcellularLocation>
</comment>
<comment type="similarity">
    <text evidence="1">Belongs to the class-III pyridoxal-phosphate-dependent aminotransferase family. HemL subfamily.</text>
</comment>
<proteinExistence type="inferred from homology"/>
<evidence type="ECO:0000255" key="1">
    <source>
        <dbReference type="HAMAP-Rule" id="MF_00375"/>
    </source>
</evidence>